<keyword id="KW-0046">Antibiotic resistance</keyword>
<keyword id="KW-0963">Cytoplasm</keyword>
<keyword id="KW-0460">Magnesium</keyword>
<keyword id="KW-0479">Metal-binding</keyword>
<keyword id="KW-0808">Transferase</keyword>
<comment type="function">
    <text evidence="1">Metallothiol transferase which confers resistance to fosfomycin by catalyzing the addition of a thiol cofactor to fosfomycin. L-cysteine is probably the physiological thiol donor.</text>
</comment>
<comment type="cofactor">
    <cofactor evidence="1">
        <name>Mg(2+)</name>
        <dbReference type="ChEBI" id="CHEBI:18420"/>
    </cofactor>
</comment>
<comment type="subunit">
    <text evidence="1">Homodimer.</text>
</comment>
<comment type="subcellular location">
    <subcellularLocation>
        <location evidence="1">Cytoplasm</location>
    </subcellularLocation>
</comment>
<comment type="similarity">
    <text evidence="1">Belongs to the fosfomycin resistance protein family. FosB subfamily.</text>
</comment>
<organism>
    <name type="scientific">Staphylococcus aureus (strain Mu3 / ATCC 700698)</name>
    <dbReference type="NCBI Taxonomy" id="418127"/>
    <lineage>
        <taxon>Bacteria</taxon>
        <taxon>Bacillati</taxon>
        <taxon>Bacillota</taxon>
        <taxon>Bacilli</taxon>
        <taxon>Bacillales</taxon>
        <taxon>Staphylococcaceae</taxon>
        <taxon>Staphylococcus</taxon>
    </lineage>
</organism>
<dbReference type="EC" id="2.5.1.-" evidence="1"/>
<dbReference type="EMBL" id="AP009324">
    <property type="protein sequence ID" value="BAF79200.1"/>
    <property type="molecule type" value="Genomic_DNA"/>
</dbReference>
<dbReference type="RefSeq" id="WP_000920239.1">
    <property type="nucleotide sequence ID" value="NZ_CTYB01000041.1"/>
</dbReference>
<dbReference type="SMR" id="A7X5T8"/>
<dbReference type="KEGG" id="saw:SAHV_2317"/>
<dbReference type="HOGENOM" id="CLU_121356_0_0_9"/>
<dbReference type="GO" id="GO:0005737">
    <property type="term" value="C:cytoplasm"/>
    <property type="evidence" value="ECO:0007669"/>
    <property type="project" value="UniProtKB-SubCell"/>
</dbReference>
<dbReference type="GO" id="GO:0000287">
    <property type="term" value="F:magnesium ion binding"/>
    <property type="evidence" value="ECO:0007669"/>
    <property type="project" value="UniProtKB-UniRule"/>
</dbReference>
<dbReference type="GO" id="GO:0016765">
    <property type="term" value="F:transferase activity, transferring alkyl or aryl (other than methyl) groups"/>
    <property type="evidence" value="ECO:0007669"/>
    <property type="project" value="UniProtKB-UniRule"/>
</dbReference>
<dbReference type="GO" id="GO:0046677">
    <property type="term" value="P:response to antibiotic"/>
    <property type="evidence" value="ECO:0007669"/>
    <property type="project" value="UniProtKB-UniRule"/>
</dbReference>
<dbReference type="Gene3D" id="3.10.180.10">
    <property type="entry name" value="2,3-Dihydroxybiphenyl 1,2-Dioxygenase, domain 1"/>
    <property type="match status" value="1"/>
</dbReference>
<dbReference type="HAMAP" id="MF_01512">
    <property type="entry name" value="FosB"/>
    <property type="match status" value="1"/>
</dbReference>
<dbReference type="InterPro" id="IPR051332">
    <property type="entry name" value="Fosfomycin_Res_Enzymes"/>
</dbReference>
<dbReference type="InterPro" id="IPR029068">
    <property type="entry name" value="Glyas_Bleomycin-R_OHBP_Dase"/>
</dbReference>
<dbReference type="InterPro" id="IPR004360">
    <property type="entry name" value="Glyas_Fos-R_dOase_dom"/>
</dbReference>
<dbReference type="InterPro" id="IPR022858">
    <property type="entry name" value="Metallothiol_Trafse_FosB"/>
</dbReference>
<dbReference type="InterPro" id="IPR037523">
    <property type="entry name" value="VOC"/>
</dbReference>
<dbReference type="NCBIfam" id="NF000493">
    <property type="entry name" value="Fos_BSH"/>
    <property type="match status" value="1"/>
</dbReference>
<dbReference type="NCBIfam" id="NF003152">
    <property type="entry name" value="PRK04101.1"/>
    <property type="match status" value="1"/>
</dbReference>
<dbReference type="PANTHER" id="PTHR36113:SF6">
    <property type="entry name" value="FOSFOMYCIN RESISTANCE PROTEIN FOSX"/>
    <property type="match status" value="1"/>
</dbReference>
<dbReference type="PANTHER" id="PTHR36113">
    <property type="entry name" value="LYASE, PUTATIVE-RELATED-RELATED"/>
    <property type="match status" value="1"/>
</dbReference>
<dbReference type="Pfam" id="PF00903">
    <property type="entry name" value="Glyoxalase"/>
    <property type="match status" value="1"/>
</dbReference>
<dbReference type="SUPFAM" id="SSF54593">
    <property type="entry name" value="Glyoxalase/Bleomycin resistance protein/Dihydroxybiphenyl dioxygenase"/>
    <property type="match status" value="1"/>
</dbReference>
<dbReference type="PROSITE" id="PS51819">
    <property type="entry name" value="VOC"/>
    <property type="match status" value="1"/>
</dbReference>
<sequence length="139" mass="16648">MLKSINHICFSVRNLNDSIHFYRDILLGKLLLTGKKTAYFELAGLWIALNEEKDIPRNEIHFSYTHIAFTIDDSEFKYWHQRLKDNNVNILEGRVRDIRDRQSIYFTDPDGHKLELHTGTLENRLNYYKEAKPHMTFYK</sequence>
<name>FOSB_STAA1</name>
<feature type="chain" id="PRO_1000024492" description="Metallothiol transferase FosB">
    <location>
        <begin position="1"/>
        <end position="139"/>
    </location>
</feature>
<feature type="domain" description="VOC" evidence="2">
    <location>
        <begin position="4"/>
        <end position="119"/>
    </location>
</feature>
<feature type="active site" description="Proton donor/acceptor" evidence="2">
    <location>
        <position position="115"/>
    </location>
</feature>
<feature type="binding site" evidence="1">
    <location>
        <position position="7"/>
    </location>
    <ligand>
        <name>Mg(2+)</name>
        <dbReference type="ChEBI" id="CHEBI:18420"/>
    </ligand>
</feature>
<feature type="binding site" evidence="1">
    <location>
        <position position="66"/>
    </location>
    <ligand>
        <name>Mg(2+)</name>
        <dbReference type="ChEBI" id="CHEBI:18420"/>
    </ligand>
</feature>
<feature type="binding site" evidence="1">
    <location>
        <position position="115"/>
    </location>
    <ligand>
        <name>Mg(2+)</name>
        <dbReference type="ChEBI" id="CHEBI:18420"/>
    </ligand>
</feature>
<protein>
    <recommendedName>
        <fullName evidence="1">Metallothiol transferase FosB</fullName>
        <ecNumber evidence="1">2.5.1.-</ecNumber>
    </recommendedName>
    <alternativeName>
        <fullName evidence="1">Fosfomycin resistance protein</fullName>
    </alternativeName>
</protein>
<accession>A7X5T8</accession>
<evidence type="ECO:0000255" key="1">
    <source>
        <dbReference type="HAMAP-Rule" id="MF_01512"/>
    </source>
</evidence>
<evidence type="ECO:0000255" key="2">
    <source>
        <dbReference type="PROSITE-ProRule" id="PRU01163"/>
    </source>
</evidence>
<proteinExistence type="inferred from homology"/>
<gene>
    <name evidence="1" type="primary">fosB</name>
    <name type="ordered locus">SAHV_2317</name>
</gene>
<reference key="1">
    <citation type="journal article" date="2008" name="Antimicrob. Agents Chemother.">
        <title>Mutated response regulator graR is responsible for phenotypic conversion of Staphylococcus aureus from heterogeneous vancomycin-intermediate resistance to vancomycin-intermediate resistance.</title>
        <authorList>
            <person name="Neoh H.-M."/>
            <person name="Cui L."/>
            <person name="Yuzawa H."/>
            <person name="Takeuchi F."/>
            <person name="Matsuo M."/>
            <person name="Hiramatsu K."/>
        </authorList>
    </citation>
    <scope>NUCLEOTIDE SEQUENCE [LARGE SCALE GENOMIC DNA]</scope>
    <source>
        <strain>Mu3 / ATCC 700698</strain>
    </source>
</reference>